<organism>
    <name type="scientific">Mycobacterium bovis (strain BCG / Pasteur 1173P2)</name>
    <dbReference type="NCBI Taxonomy" id="410289"/>
    <lineage>
        <taxon>Bacteria</taxon>
        <taxon>Bacillati</taxon>
        <taxon>Actinomycetota</taxon>
        <taxon>Actinomycetes</taxon>
        <taxon>Mycobacteriales</taxon>
        <taxon>Mycobacteriaceae</taxon>
        <taxon>Mycobacterium</taxon>
        <taxon>Mycobacterium tuberculosis complex</taxon>
    </lineage>
</organism>
<dbReference type="EMBL" id="AM408590">
    <property type="protein sequence ID" value="CAL73513.1"/>
    <property type="molecule type" value="Genomic_DNA"/>
</dbReference>
<dbReference type="RefSeq" id="WP_003418357.1">
    <property type="nucleotide sequence ID" value="NC_008769.1"/>
</dbReference>
<dbReference type="SMR" id="A1KPE5"/>
<dbReference type="KEGG" id="mbb:BCG_3524c"/>
<dbReference type="HOGENOM" id="CLU_072439_5_0_11"/>
<dbReference type="Proteomes" id="UP000001472">
    <property type="component" value="Chromosome"/>
</dbReference>
<dbReference type="GO" id="GO:1990904">
    <property type="term" value="C:ribonucleoprotein complex"/>
    <property type="evidence" value="ECO:0007669"/>
    <property type="project" value="UniProtKB-KW"/>
</dbReference>
<dbReference type="GO" id="GO:0005840">
    <property type="term" value="C:ribosome"/>
    <property type="evidence" value="ECO:0007669"/>
    <property type="project" value="UniProtKB-KW"/>
</dbReference>
<dbReference type="GO" id="GO:0019843">
    <property type="term" value="F:rRNA binding"/>
    <property type="evidence" value="ECO:0007669"/>
    <property type="project" value="UniProtKB-UniRule"/>
</dbReference>
<dbReference type="GO" id="GO:0003735">
    <property type="term" value="F:structural constituent of ribosome"/>
    <property type="evidence" value="ECO:0007669"/>
    <property type="project" value="InterPro"/>
</dbReference>
<dbReference type="GO" id="GO:0006412">
    <property type="term" value="P:translation"/>
    <property type="evidence" value="ECO:0007669"/>
    <property type="project" value="UniProtKB-UniRule"/>
</dbReference>
<dbReference type="FunFam" id="3.30.420.80:FF:000001">
    <property type="entry name" value="30S ribosomal protein S11"/>
    <property type="match status" value="1"/>
</dbReference>
<dbReference type="Gene3D" id="3.30.420.80">
    <property type="entry name" value="Ribosomal protein S11"/>
    <property type="match status" value="1"/>
</dbReference>
<dbReference type="HAMAP" id="MF_01310">
    <property type="entry name" value="Ribosomal_uS11"/>
    <property type="match status" value="1"/>
</dbReference>
<dbReference type="InterPro" id="IPR001971">
    <property type="entry name" value="Ribosomal_uS11"/>
</dbReference>
<dbReference type="InterPro" id="IPR019981">
    <property type="entry name" value="Ribosomal_uS11_bac-type"/>
</dbReference>
<dbReference type="InterPro" id="IPR018102">
    <property type="entry name" value="Ribosomal_uS11_CS"/>
</dbReference>
<dbReference type="InterPro" id="IPR036967">
    <property type="entry name" value="Ribosomal_uS11_sf"/>
</dbReference>
<dbReference type="NCBIfam" id="NF003698">
    <property type="entry name" value="PRK05309.1"/>
    <property type="match status" value="1"/>
</dbReference>
<dbReference type="NCBIfam" id="TIGR03632">
    <property type="entry name" value="uS11_bact"/>
    <property type="match status" value="1"/>
</dbReference>
<dbReference type="PANTHER" id="PTHR11759">
    <property type="entry name" value="40S RIBOSOMAL PROTEIN S14/30S RIBOSOMAL PROTEIN S11"/>
    <property type="match status" value="1"/>
</dbReference>
<dbReference type="Pfam" id="PF00411">
    <property type="entry name" value="Ribosomal_S11"/>
    <property type="match status" value="1"/>
</dbReference>
<dbReference type="PIRSF" id="PIRSF002131">
    <property type="entry name" value="Ribosomal_S11"/>
    <property type="match status" value="1"/>
</dbReference>
<dbReference type="SUPFAM" id="SSF53137">
    <property type="entry name" value="Translational machinery components"/>
    <property type="match status" value="1"/>
</dbReference>
<dbReference type="PROSITE" id="PS00054">
    <property type="entry name" value="RIBOSOMAL_S11"/>
    <property type="match status" value="1"/>
</dbReference>
<accession>A1KPE5</accession>
<keyword id="KW-0687">Ribonucleoprotein</keyword>
<keyword id="KW-0689">Ribosomal protein</keyword>
<keyword id="KW-0694">RNA-binding</keyword>
<keyword id="KW-0699">rRNA-binding</keyword>
<sequence length="139" mass="14771">MPPAKKGPATSARKGQKTRRREKKNVPHGAAHIKSTFNNTIVTITDPQGNVIAWASSGHVGFKGSRKSTPFAAQLAAENAARKAQDHGVRKVDVFVKGPGSGRETAIRSLQAAGLEVGAISDVTPQPHNGVRPPNRRRV</sequence>
<gene>
    <name evidence="1" type="primary">rpsK</name>
    <name type="ordered locus">BCG_3524c</name>
</gene>
<name>RS11_MYCBP</name>
<evidence type="ECO:0000255" key="1">
    <source>
        <dbReference type="HAMAP-Rule" id="MF_01310"/>
    </source>
</evidence>
<evidence type="ECO:0000256" key="2">
    <source>
        <dbReference type="SAM" id="MobiDB-lite"/>
    </source>
</evidence>
<evidence type="ECO:0000305" key="3"/>
<feature type="chain" id="PRO_0000294795" description="Small ribosomal subunit protein uS11">
    <location>
        <begin position="1"/>
        <end position="139"/>
    </location>
</feature>
<feature type="region of interest" description="Disordered" evidence="2">
    <location>
        <begin position="1"/>
        <end position="33"/>
    </location>
</feature>
<feature type="compositionally biased region" description="Basic residues" evidence="2">
    <location>
        <begin position="14"/>
        <end position="23"/>
    </location>
</feature>
<protein>
    <recommendedName>
        <fullName evidence="1">Small ribosomal subunit protein uS11</fullName>
    </recommendedName>
    <alternativeName>
        <fullName evidence="3">30S ribosomal protein S11</fullName>
    </alternativeName>
</protein>
<comment type="function">
    <text evidence="1">Located on the platform of the 30S subunit, it bridges several disparate RNA helices of the 16S rRNA. Forms part of the Shine-Dalgarno cleft in the 70S ribosome.</text>
</comment>
<comment type="subunit">
    <text evidence="1">Part of the 30S ribosomal subunit. Interacts with proteins S7 and S18. Binds to IF-3.</text>
</comment>
<comment type="similarity">
    <text evidence="1">Belongs to the universal ribosomal protein uS11 family.</text>
</comment>
<proteinExistence type="inferred from homology"/>
<reference key="1">
    <citation type="journal article" date="2007" name="Proc. Natl. Acad. Sci. U.S.A.">
        <title>Genome plasticity of BCG and impact on vaccine efficacy.</title>
        <authorList>
            <person name="Brosch R."/>
            <person name="Gordon S.V."/>
            <person name="Garnier T."/>
            <person name="Eiglmeier K."/>
            <person name="Frigui W."/>
            <person name="Valenti P."/>
            <person name="Dos Santos S."/>
            <person name="Duthoy S."/>
            <person name="Lacroix C."/>
            <person name="Garcia-Pelayo C."/>
            <person name="Inwald J.K."/>
            <person name="Golby P."/>
            <person name="Garcia J.N."/>
            <person name="Hewinson R.G."/>
            <person name="Behr M.A."/>
            <person name="Quail M.A."/>
            <person name="Churcher C."/>
            <person name="Barrell B.G."/>
            <person name="Parkhill J."/>
            <person name="Cole S.T."/>
        </authorList>
    </citation>
    <scope>NUCLEOTIDE SEQUENCE [LARGE SCALE GENOMIC DNA]</scope>
    <source>
        <strain>BCG / Pasteur 1173P2</strain>
    </source>
</reference>